<proteinExistence type="inferred from homology"/>
<dbReference type="EC" id="2.7.7.59" evidence="1"/>
<dbReference type="EC" id="3.1.4.-" evidence="1"/>
<dbReference type="EMBL" id="CP000572">
    <property type="protein sequence ID" value="ABN92548.1"/>
    <property type="molecule type" value="Genomic_DNA"/>
</dbReference>
<dbReference type="RefSeq" id="WP_004535423.1">
    <property type="nucleotide sequence ID" value="NC_009076.1"/>
</dbReference>
<dbReference type="SMR" id="A3NWN4"/>
<dbReference type="KEGG" id="bpl:BURPS1106A_2496"/>
<dbReference type="HOGENOM" id="CLU_012833_0_0_4"/>
<dbReference type="Proteomes" id="UP000006738">
    <property type="component" value="Chromosome I"/>
</dbReference>
<dbReference type="GO" id="GO:0008773">
    <property type="term" value="F:[protein-PII] uridylyltransferase activity"/>
    <property type="evidence" value="ECO:0007669"/>
    <property type="project" value="UniProtKB-UniRule"/>
</dbReference>
<dbReference type="GO" id="GO:0008081">
    <property type="term" value="F:phosphoric diester hydrolase activity"/>
    <property type="evidence" value="ECO:0007669"/>
    <property type="project" value="UniProtKB-UniRule"/>
</dbReference>
<dbReference type="GO" id="GO:0006808">
    <property type="term" value="P:regulation of nitrogen utilization"/>
    <property type="evidence" value="ECO:0007669"/>
    <property type="project" value="UniProtKB-UniRule"/>
</dbReference>
<dbReference type="CDD" id="cd04899">
    <property type="entry name" value="ACT_ACR-UUR-like_2"/>
    <property type="match status" value="1"/>
</dbReference>
<dbReference type="CDD" id="cd04900">
    <property type="entry name" value="ACT_UUR-like_1"/>
    <property type="match status" value="1"/>
</dbReference>
<dbReference type="CDD" id="cd00077">
    <property type="entry name" value="HDc"/>
    <property type="match status" value="1"/>
</dbReference>
<dbReference type="CDD" id="cd05401">
    <property type="entry name" value="NT_GlnE_GlnD_like"/>
    <property type="match status" value="1"/>
</dbReference>
<dbReference type="Gene3D" id="3.30.70.260">
    <property type="match status" value="1"/>
</dbReference>
<dbReference type="Gene3D" id="3.30.460.10">
    <property type="entry name" value="Beta Polymerase, domain 2"/>
    <property type="match status" value="1"/>
</dbReference>
<dbReference type="Gene3D" id="1.10.3210.10">
    <property type="entry name" value="Hypothetical protein af1432"/>
    <property type="match status" value="1"/>
</dbReference>
<dbReference type="Gene3D" id="1.20.120.330">
    <property type="entry name" value="Nucleotidyltransferases domain 2"/>
    <property type="match status" value="1"/>
</dbReference>
<dbReference type="HAMAP" id="MF_00277">
    <property type="entry name" value="PII_uridylyl_transf"/>
    <property type="match status" value="1"/>
</dbReference>
<dbReference type="InterPro" id="IPR045865">
    <property type="entry name" value="ACT-like_dom_sf"/>
</dbReference>
<dbReference type="InterPro" id="IPR002912">
    <property type="entry name" value="ACT_dom"/>
</dbReference>
<dbReference type="InterPro" id="IPR003607">
    <property type="entry name" value="HD/PDEase_dom"/>
</dbReference>
<dbReference type="InterPro" id="IPR006674">
    <property type="entry name" value="HD_domain"/>
</dbReference>
<dbReference type="InterPro" id="IPR043519">
    <property type="entry name" value="NT_sf"/>
</dbReference>
<dbReference type="InterPro" id="IPR013546">
    <property type="entry name" value="PII_UdlTrfase/GS_AdlTrfase"/>
</dbReference>
<dbReference type="InterPro" id="IPR002934">
    <property type="entry name" value="Polymerase_NTP_transf_dom"/>
</dbReference>
<dbReference type="InterPro" id="IPR010043">
    <property type="entry name" value="UTase/UR"/>
</dbReference>
<dbReference type="NCBIfam" id="NF002837">
    <property type="entry name" value="PRK03059.1"/>
    <property type="match status" value="1"/>
</dbReference>
<dbReference type="NCBIfam" id="TIGR01693">
    <property type="entry name" value="UTase_glnD"/>
    <property type="match status" value="1"/>
</dbReference>
<dbReference type="PANTHER" id="PTHR47320">
    <property type="entry name" value="BIFUNCTIONAL URIDYLYLTRANSFERASE/URIDYLYL-REMOVING ENZYME"/>
    <property type="match status" value="1"/>
</dbReference>
<dbReference type="PANTHER" id="PTHR47320:SF1">
    <property type="entry name" value="BIFUNCTIONAL URIDYLYLTRANSFERASE_URIDYLYL-REMOVING ENZYME"/>
    <property type="match status" value="1"/>
</dbReference>
<dbReference type="Pfam" id="PF08335">
    <property type="entry name" value="GlnD_UR_UTase"/>
    <property type="match status" value="1"/>
</dbReference>
<dbReference type="Pfam" id="PF01966">
    <property type="entry name" value="HD"/>
    <property type="match status" value="1"/>
</dbReference>
<dbReference type="Pfam" id="PF01909">
    <property type="entry name" value="NTP_transf_2"/>
    <property type="match status" value="1"/>
</dbReference>
<dbReference type="PIRSF" id="PIRSF006288">
    <property type="entry name" value="PII_uridyltransf"/>
    <property type="match status" value="1"/>
</dbReference>
<dbReference type="SMART" id="SM00471">
    <property type="entry name" value="HDc"/>
    <property type="match status" value="1"/>
</dbReference>
<dbReference type="SUPFAM" id="SSF55021">
    <property type="entry name" value="ACT-like"/>
    <property type="match status" value="2"/>
</dbReference>
<dbReference type="SUPFAM" id="SSF109604">
    <property type="entry name" value="HD-domain/PDEase-like"/>
    <property type="match status" value="1"/>
</dbReference>
<dbReference type="SUPFAM" id="SSF81301">
    <property type="entry name" value="Nucleotidyltransferase"/>
    <property type="match status" value="1"/>
</dbReference>
<dbReference type="SUPFAM" id="SSF81593">
    <property type="entry name" value="Nucleotidyltransferase substrate binding subunit/domain"/>
    <property type="match status" value="1"/>
</dbReference>
<dbReference type="PROSITE" id="PS51671">
    <property type="entry name" value="ACT"/>
    <property type="match status" value="2"/>
</dbReference>
<dbReference type="PROSITE" id="PS51831">
    <property type="entry name" value="HD"/>
    <property type="match status" value="1"/>
</dbReference>
<evidence type="ECO:0000255" key="1">
    <source>
        <dbReference type="HAMAP-Rule" id="MF_00277"/>
    </source>
</evidence>
<evidence type="ECO:0000255" key="2">
    <source>
        <dbReference type="PROSITE-ProRule" id="PRU01175"/>
    </source>
</evidence>
<gene>
    <name evidence="1" type="primary">glnD</name>
    <name type="ordered locus">BURPS1106A_2496</name>
</gene>
<name>GLND_BURP0</name>
<reference key="1">
    <citation type="journal article" date="2010" name="Genome Biol. Evol.">
        <title>Continuing evolution of Burkholderia mallei through genome reduction and large-scale rearrangements.</title>
        <authorList>
            <person name="Losada L."/>
            <person name="Ronning C.M."/>
            <person name="DeShazer D."/>
            <person name="Woods D."/>
            <person name="Fedorova N."/>
            <person name="Kim H.S."/>
            <person name="Shabalina S.A."/>
            <person name="Pearson T.R."/>
            <person name="Brinkac L."/>
            <person name="Tan P."/>
            <person name="Nandi T."/>
            <person name="Crabtree J."/>
            <person name="Badger J."/>
            <person name="Beckstrom-Sternberg S."/>
            <person name="Saqib M."/>
            <person name="Schutzer S.E."/>
            <person name="Keim P."/>
            <person name="Nierman W.C."/>
        </authorList>
    </citation>
    <scope>NUCLEOTIDE SEQUENCE [LARGE SCALE GENOMIC DNA]</scope>
    <source>
        <strain>1106a</strain>
    </source>
</reference>
<feature type="chain" id="PRO_1000022334" description="Bifunctional uridylyltransferase/uridylyl-removing enzyme">
    <location>
        <begin position="1"/>
        <end position="858"/>
    </location>
</feature>
<feature type="domain" description="HD" evidence="2">
    <location>
        <begin position="443"/>
        <end position="565"/>
    </location>
</feature>
<feature type="domain" description="ACT 1" evidence="1">
    <location>
        <begin position="682"/>
        <end position="761"/>
    </location>
</feature>
<feature type="domain" description="ACT 2" evidence="1">
    <location>
        <begin position="790"/>
        <end position="858"/>
    </location>
</feature>
<feature type="region of interest" description="Uridylyltransferase">
    <location>
        <begin position="1"/>
        <end position="324"/>
    </location>
</feature>
<feature type="region of interest" description="Uridylyl-removing">
    <location>
        <begin position="325"/>
        <end position="681"/>
    </location>
</feature>
<protein>
    <recommendedName>
        <fullName evidence="1">Bifunctional uridylyltransferase/uridylyl-removing enzyme</fullName>
        <shortName evidence="1">UTase/UR</shortName>
    </recommendedName>
    <alternativeName>
        <fullName evidence="1">Bifunctional [protein-PII] modification enzyme</fullName>
    </alternativeName>
    <alternativeName>
        <fullName evidence="1">Bifunctional nitrogen sensor protein</fullName>
    </alternativeName>
    <domain>
        <recommendedName>
            <fullName evidence="1">[Protein-PII] uridylyltransferase</fullName>
            <shortName evidence="1">PII uridylyltransferase</shortName>
            <shortName evidence="1">UTase</shortName>
            <ecNumber evidence="1">2.7.7.59</ecNumber>
        </recommendedName>
    </domain>
    <domain>
        <recommendedName>
            <fullName evidence="1">[Protein-PII]-UMP uridylyl-removing enzyme</fullName>
            <shortName evidence="1">UR</shortName>
            <ecNumber evidence="1">3.1.4.-</ecNumber>
        </recommendedName>
    </domain>
</protein>
<comment type="function">
    <text evidence="1">Modifies, by uridylylation and deuridylylation, the PII regulatory proteins (GlnB and homologs), in response to the nitrogen status of the cell that GlnD senses through the glutamine level. Under low glutamine levels, catalyzes the conversion of the PII proteins and UTP to PII-UMP and PPi, while under higher glutamine levels, GlnD hydrolyzes PII-UMP to PII and UMP (deuridylylation). Thus, controls uridylylation state and activity of the PII proteins, and plays an important role in the regulation of nitrogen assimilation and metabolism.</text>
</comment>
<comment type="catalytic activity">
    <reaction evidence="1">
        <text>[protein-PII]-L-tyrosine + UTP = [protein-PII]-uridylyl-L-tyrosine + diphosphate</text>
        <dbReference type="Rhea" id="RHEA:13673"/>
        <dbReference type="Rhea" id="RHEA-COMP:12147"/>
        <dbReference type="Rhea" id="RHEA-COMP:12148"/>
        <dbReference type="ChEBI" id="CHEBI:33019"/>
        <dbReference type="ChEBI" id="CHEBI:46398"/>
        <dbReference type="ChEBI" id="CHEBI:46858"/>
        <dbReference type="ChEBI" id="CHEBI:90602"/>
        <dbReference type="EC" id="2.7.7.59"/>
    </reaction>
</comment>
<comment type="catalytic activity">
    <reaction evidence="1">
        <text>[protein-PII]-uridylyl-L-tyrosine + H2O = [protein-PII]-L-tyrosine + UMP + H(+)</text>
        <dbReference type="Rhea" id="RHEA:48600"/>
        <dbReference type="Rhea" id="RHEA-COMP:12147"/>
        <dbReference type="Rhea" id="RHEA-COMP:12148"/>
        <dbReference type="ChEBI" id="CHEBI:15377"/>
        <dbReference type="ChEBI" id="CHEBI:15378"/>
        <dbReference type="ChEBI" id="CHEBI:46858"/>
        <dbReference type="ChEBI" id="CHEBI:57865"/>
        <dbReference type="ChEBI" id="CHEBI:90602"/>
    </reaction>
</comment>
<comment type="cofactor">
    <cofactor evidence="1">
        <name>Mg(2+)</name>
        <dbReference type="ChEBI" id="CHEBI:18420"/>
    </cofactor>
</comment>
<comment type="activity regulation">
    <text evidence="1">Uridylyltransferase (UTase) activity is inhibited by glutamine, while glutamine activates uridylyl-removing (UR) activity.</text>
</comment>
<comment type="domain">
    <text evidence="1">Has four distinct domains: an N-terminal nucleotidyltransferase (NT) domain responsible for UTase activity, a central HD domain that encodes UR activity, and two C-terminal ACT domains that seem to have a role in glutamine sensing.</text>
</comment>
<comment type="similarity">
    <text evidence="1">Belongs to the GlnD family.</text>
</comment>
<organism>
    <name type="scientific">Burkholderia pseudomallei (strain 1106a)</name>
    <dbReference type="NCBI Taxonomy" id="357348"/>
    <lineage>
        <taxon>Bacteria</taxon>
        <taxon>Pseudomonadati</taxon>
        <taxon>Pseudomonadota</taxon>
        <taxon>Betaproteobacteria</taxon>
        <taxon>Burkholderiales</taxon>
        <taxon>Burkholderiaceae</taxon>
        <taxon>Burkholderia</taxon>
        <taxon>pseudomallei group</taxon>
    </lineage>
</organism>
<keyword id="KW-0378">Hydrolase</keyword>
<keyword id="KW-0460">Magnesium</keyword>
<keyword id="KW-0511">Multifunctional enzyme</keyword>
<keyword id="KW-0548">Nucleotidyltransferase</keyword>
<keyword id="KW-0677">Repeat</keyword>
<keyword id="KW-0808">Transferase</keyword>
<sequence>MSASVAEPPPALSRKAEFKAAKAELLARFKSANHVTPLMHALSRATDDALRSLWQECGLPATLALVAVGGFGRGELSPHSDVDILVLLPDAHASELDERIERFIGMAWDLGLEIGSSVRTVDQCIEEASHDVTVQTSLLEARRIVGSTALFERFMLRYREALDARAFFQAKVLEMRQRHAKFQDTPYSLEPNVKESPGGLRDLQTILWIARAAGFGSSWRELDTRGLITDREARELRRNEGFLKTLRARLHVIAGRRQDILVFDLQTQAAESFGYQPTSAKRASEQLMRRYYWAAKAVTQLATILIQNIEAQLFPATSGVTRVLSPGRFVEKQGMLEIAADDVFERHPDAILEAFLLYEATRGVKGLSARTLRALYNSRDVMNNAWRRDPRNRRTFMQILQQPEGITHAFRLMNQTSVLGRYLLNFRRIVGQMQHDLYHVYTVDQHILMVLRNIRRFAVAEHAHEYPFCSQLIVNFERPWVLYVAALFHDIAKGRGGDHSALGMADARRFCREHGIEGDDAALVVWLVQHHLTMSQVAQKQDTSDPVVIKRFAELVGSERRLTALYLLTVADIRGTSPKVWNTWKGKLLEDLYRATLAVLGGAQPDAHSELKTRQEEALALLRLETVPPDAHRALWDQLDVGYFLRHDAADIAWQTRVLYRHVAADTAIVRARPSPVGDALQVLVYVKDRSDLFAGICAYFDRNGLSVLDARVNTTRHGYALDNFIVTQTEHDVQYRDIANLVEQQLAARLAESAPLPEPSKGRLSRLSRTFPITPRVDLRADERGQYYILSVSANDRPGLLYSIARVLAEHRVGVHAARINTLGERVEDVFMLDGTGLSDNRLQIQVETELLRAIAV</sequence>
<accession>A3NWN4</accession>